<protein>
    <recommendedName>
        <fullName evidence="1">tRNA (guanine(37)-N(1))-methyltransferase</fullName>
        <ecNumber evidence="1">2.1.1.228</ecNumber>
    </recommendedName>
    <alternativeName>
        <fullName evidence="1">M1G-methyltransferase</fullName>
    </alternativeName>
    <alternativeName>
        <fullName evidence="1">tRNA [GM37] methyltransferase</fullName>
    </alternativeName>
    <alternativeName>
        <fullName evidence="1">tRNA methyltransferase 5 homolog</fullName>
    </alternativeName>
</protein>
<feature type="chain" id="PRO_0000414129" description="tRNA (guanine(37)-N(1))-methyltransferase">
    <location>
        <begin position="1"/>
        <end position="457"/>
    </location>
</feature>
<feature type="binding site" evidence="1">
    <location>
        <position position="240"/>
    </location>
    <ligand>
        <name>S-adenosyl-L-methionine</name>
        <dbReference type="ChEBI" id="CHEBI:59789"/>
    </ligand>
</feature>
<feature type="binding site" evidence="1">
    <location>
        <begin position="278"/>
        <end position="279"/>
    </location>
    <ligand>
        <name>S-adenosyl-L-methionine</name>
        <dbReference type="ChEBI" id="CHEBI:59789"/>
    </ligand>
</feature>
<feature type="binding site" evidence="1">
    <location>
        <begin position="306"/>
        <end position="307"/>
    </location>
    <ligand>
        <name>S-adenosyl-L-methionine</name>
        <dbReference type="ChEBI" id="CHEBI:59789"/>
    </ligand>
</feature>
<feature type="binding site" evidence="1">
    <location>
        <position position="338"/>
    </location>
    <ligand>
        <name>S-adenosyl-L-methionine</name>
        <dbReference type="ChEBI" id="CHEBI:59789"/>
    </ligand>
</feature>
<organism>
    <name type="scientific">Drosophila melanogaster</name>
    <name type="common">Fruit fly</name>
    <dbReference type="NCBI Taxonomy" id="7227"/>
    <lineage>
        <taxon>Eukaryota</taxon>
        <taxon>Metazoa</taxon>
        <taxon>Ecdysozoa</taxon>
        <taxon>Arthropoda</taxon>
        <taxon>Hexapoda</taxon>
        <taxon>Insecta</taxon>
        <taxon>Pterygota</taxon>
        <taxon>Neoptera</taxon>
        <taxon>Endopterygota</taxon>
        <taxon>Diptera</taxon>
        <taxon>Brachycera</taxon>
        <taxon>Muscomorpha</taxon>
        <taxon>Ephydroidea</taxon>
        <taxon>Drosophilidae</taxon>
        <taxon>Drosophila</taxon>
        <taxon>Sophophora</taxon>
    </lineage>
</organism>
<name>TRM5_DROME</name>
<gene>
    <name type="ORF">CG32281</name>
</gene>
<sequence length="457" mass="53074">MFIVSRLKDLTIITNRLRHYFRNMDVKELQPPSSVRGMQELQREQFRKIVQVPRLRVPESQVQRVMPLVKKFLLKMEHLHPVRAVDQSREILLHPTPVKNWDSLPTEDLQRQKVNAENFSFADLELRYENWSANEILKSVLPTEEEGLTSYSRIGHIAHLNLRDHLLPYKQLIGQVLRDKLPNCRTVVNKASSIDNTYRNFQLELICGDPDYQVETKENGVPFEFDFSKVYWNPRLSTEHERIVKMLKSDDVLYDVFAGVGPFSIPAAKKRCHVLANDLNPESFRWLQHNAKRNKCLPNIKMSNKDGRQFIVEELREDLLKRLCTTDTTTYGIHITMNLPAMAVEFLDAFRGLYSADELAQLPTNVCYPTVHVYSFAKGENTKELVRQLVESNLGASLDENLLQGINFVRNVAPNKDMYRVSFKLSLNMLTTLKEVEVTRKRYAEEELEVATKVKCV</sequence>
<reference key="1">
    <citation type="journal article" date="2000" name="Science">
        <title>The genome sequence of Drosophila melanogaster.</title>
        <authorList>
            <person name="Adams M.D."/>
            <person name="Celniker S.E."/>
            <person name="Holt R.A."/>
            <person name="Evans C.A."/>
            <person name="Gocayne J.D."/>
            <person name="Amanatides P.G."/>
            <person name="Scherer S.E."/>
            <person name="Li P.W."/>
            <person name="Hoskins R.A."/>
            <person name="Galle R.F."/>
            <person name="George R.A."/>
            <person name="Lewis S.E."/>
            <person name="Richards S."/>
            <person name="Ashburner M."/>
            <person name="Henderson S.N."/>
            <person name="Sutton G.G."/>
            <person name="Wortman J.R."/>
            <person name="Yandell M.D."/>
            <person name="Zhang Q."/>
            <person name="Chen L.X."/>
            <person name="Brandon R.C."/>
            <person name="Rogers Y.-H.C."/>
            <person name="Blazej R.G."/>
            <person name="Champe M."/>
            <person name="Pfeiffer B.D."/>
            <person name="Wan K.H."/>
            <person name="Doyle C."/>
            <person name="Baxter E.G."/>
            <person name="Helt G."/>
            <person name="Nelson C.R."/>
            <person name="Miklos G.L.G."/>
            <person name="Abril J.F."/>
            <person name="Agbayani A."/>
            <person name="An H.-J."/>
            <person name="Andrews-Pfannkoch C."/>
            <person name="Baldwin D."/>
            <person name="Ballew R.M."/>
            <person name="Basu A."/>
            <person name="Baxendale J."/>
            <person name="Bayraktaroglu L."/>
            <person name="Beasley E.M."/>
            <person name="Beeson K.Y."/>
            <person name="Benos P.V."/>
            <person name="Berman B.P."/>
            <person name="Bhandari D."/>
            <person name="Bolshakov S."/>
            <person name="Borkova D."/>
            <person name="Botchan M.R."/>
            <person name="Bouck J."/>
            <person name="Brokstein P."/>
            <person name="Brottier P."/>
            <person name="Burtis K.C."/>
            <person name="Busam D.A."/>
            <person name="Butler H."/>
            <person name="Cadieu E."/>
            <person name="Center A."/>
            <person name="Chandra I."/>
            <person name="Cherry J.M."/>
            <person name="Cawley S."/>
            <person name="Dahlke C."/>
            <person name="Davenport L.B."/>
            <person name="Davies P."/>
            <person name="de Pablos B."/>
            <person name="Delcher A."/>
            <person name="Deng Z."/>
            <person name="Mays A.D."/>
            <person name="Dew I."/>
            <person name="Dietz S.M."/>
            <person name="Dodson K."/>
            <person name="Doup L.E."/>
            <person name="Downes M."/>
            <person name="Dugan-Rocha S."/>
            <person name="Dunkov B.C."/>
            <person name="Dunn P."/>
            <person name="Durbin K.J."/>
            <person name="Evangelista C.C."/>
            <person name="Ferraz C."/>
            <person name="Ferriera S."/>
            <person name="Fleischmann W."/>
            <person name="Fosler C."/>
            <person name="Gabrielian A.E."/>
            <person name="Garg N.S."/>
            <person name="Gelbart W.M."/>
            <person name="Glasser K."/>
            <person name="Glodek A."/>
            <person name="Gong F."/>
            <person name="Gorrell J.H."/>
            <person name="Gu Z."/>
            <person name="Guan P."/>
            <person name="Harris M."/>
            <person name="Harris N.L."/>
            <person name="Harvey D.A."/>
            <person name="Heiman T.J."/>
            <person name="Hernandez J.R."/>
            <person name="Houck J."/>
            <person name="Hostin D."/>
            <person name="Houston K.A."/>
            <person name="Howland T.J."/>
            <person name="Wei M.-H."/>
            <person name="Ibegwam C."/>
            <person name="Jalali M."/>
            <person name="Kalush F."/>
            <person name="Karpen G.H."/>
            <person name="Ke Z."/>
            <person name="Kennison J.A."/>
            <person name="Ketchum K.A."/>
            <person name="Kimmel B.E."/>
            <person name="Kodira C.D."/>
            <person name="Kraft C.L."/>
            <person name="Kravitz S."/>
            <person name="Kulp D."/>
            <person name="Lai Z."/>
            <person name="Lasko P."/>
            <person name="Lei Y."/>
            <person name="Levitsky A.A."/>
            <person name="Li J.H."/>
            <person name="Li Z."/>
            <person name="Liang Y."/>
            <person name="Lin X."/>
            <person name="Liu X."/>
            <person name="Mattei B."/>
            <person name="McIntosh T.C."/>
            <person name="McLeod M.P."/>
            <person name="McPherson D."/>
            <person name="Merkulov G."/>
            <person name="Milshina N.V."/>
            <person name="Mobarry C."/>
            <person name="Morris J."/>
            <person name="Moshrefi A."/>
            <person name="Mount S.M."/>
            <person name="Moy M."/>
            <person name="Murphy B."/>
            <person name="Murphy L."/>
            <person name="Muzny D.M."/>
            <person name="Nelson D.L."/>
            <person name="Nelson D.R."/>
            <person name="Nelson K.A."/>
            <person name="Nixon K."/>
            <person name="Nusskern D.R."/>
            <person name="Pacleb J.M."/>
            <person name="Palazzolo M."/>
            <person name="Pittman G.S."/>
            <person name="Pan S."/>
            <person name="Pollard J."/>
            <person name="Puri V."/>
            <person name="Reese M.G."/>
            <person name="Reinert K."/>
            <person name="Remington K."/>
            <person name="Saunders R.D.C."/>
            <person name="Scheeler F."/>
            <person name="Shen H."/>
            <person name="Shue B.C."/>
            <person name="Siden-Kiamos I."/>
            <person name="Simpson M."/>
            <person name="Skupski M.P."/>
            <person name="Smith T.J."/>
            <person name="Spier E."/>
            <person name="Spradling A.C."/>
            <person name="Stapleton M."/>
            <person name="Strong R."/>
            <person name="Sun E."/>
            <person name="Svirskas R."/>
            <person name="Tector C."/>
            <person name="Turner R."/>
            <person name="Venter E."/>
            <person name="Wang A.H."/>
            <person name="Wang X."/>
            <person name="Wang Z.-Y."/>
            <person name="Wassarman D.A."/>
            <person name="Weinstock G.M."/>
            <person name="Weissenbach J."/>
            <person name="Williams S.M."/>
            <person name="Woodage T."/>
            <person name="Worley K.C."/>
            <person name="Wu D."/>
            <person name="Yang S."/>
            <person name="Yao Q.A."/>
            <person name="Ye J."/>
            <person name="Yeh R.-F."/>
            <person name="Zaveri J.S."/>
            <person name="Zhan M."/>
            <person name="Zhang G."/>
            <person name="Zhao Q."/>
            <person name="Zheng L."/>
            <person name="Zheng X.H."/>
            <person name="Zhong F.N."/>
            <person name="Zhong W."/>
            <person name="Zhou X."/>
            <person name="Zhu S.C."/>
            <person name="Zhu X."/>
            <person name="Smith H.O."/>
            <person name="Gibbs R.A."/>
            <person name="Myers E.W."/>
            <person name="Rubin G.M."/>
            <person name="Venter J.C."/>
        </authorList>
    </citation>
    <scope>NUCLEOTIDE SEQUENCE [LARGE SCALE GENOMIC DNA]</scope>
    <source>
        <strain>Berkeley</strain>
    </source>
</reference>
<reference key="2">
    <citation type="journal article" date="2002" name="Genome Biol.">
        <title>Annotation of the Drosophila melanogaster euchromatic genome: a systematic review.</title>
        <authorList>
            <person name="Misra S."/>
            <person name="Crosby M.A."/>
            <person name="Mungall C.J."/>
            <person name="Matthews B.B."/>
            <person name="Campbell K.S."/>
            <person name="Hradecky P."/>
            <person name="Huang Y."/>
            <person name="Kaminker J.S."/>
            <person name="Millburn G.H."/>
            <person name="Prochnik S.E."/>
            <person name="Smith C.D."/>
            <person name="Tupy J.L."/>
            <person name="Whitfield E.J."/>
            <person name="Bayraktaroglu L."/>
            <person name="Berman B.P."/>
            <person name="Bettencourt B.R."/>
            <person name="Celniker S.E."/>
            <person name="de Grey A.D.N.J."/>
            <person name="Drysdale R.A."/>
            <person name="Harris N.L."/>
            <person name="Richter J."/>
            <person name="Russo S."/>
            <person name="Schroeder A.J."/>
            <person name="Shu S.Q."/>
            <person name="Stapleton M."/>
            <person name="Yamada C."/>
            <person name="Ashburner M."/>
            <person name="Gelbart W.M."/>
            <person name="Rubin G.M."/>
            <person name="Lewis S.E."/>
        </authorList>
    </citation>
    <scope>GENOME REANNOTATION</scope>
    <source>
        <strain>Berkeley</strain>
    </source>
</reference>
<reference key="3">
    <citation type="submission" date="2009-04" db="EMBL/GenBank/DDBJ databases">
        <authorList>
            <person name="Carlson J."/>
            <person name="Booth B."/>
            <person name="Frise E."/>
            <person name="Sandler J."/>
            <person name="Wan K."/>
            <person name="Yu C."/>
            <person name="Celniker S.E."/>
        </authorList>
    </citation>
    <scope>NUCLEOTIDE SEQUENCE [LARGE SCALE MRNA]</scope>
</reference>
<comment type="function">
    <text evidence="1">Specifically methylates the N1 position of guanosine-37 in various cytoplasmic and mitochondrial tRNAs. Methylation is not dependent on the nature of the nucleoside 5' of the target nucleoside. This is the first step in the biosynthesis of wybutosine (yW), a modified base adjacent to the anticodon of tRNAs and required for accurate decoding.</text>
</comment>
<comment type="catalytic activity">
    <reaction evidence="1">
        <text>guanosine(37) in tRNA + S-adenosyl-L-methionine = N(1)-methylguanosine(37) in tRNA + S-adenosyl-L-homocysteine + H(+)</text>
        <dbReference type="Rhea" id="RHEA:36899"/>
        <dbReference type="Rhea" id="RHEA-COMP:10145"/>
        <dbReference type="Rhea" id="RHEA-COMP:10147"/>
        <dbReference type="ChEBI" id="CHEBI:15378"/>
        <dbReference type="ChEBI" id="CHEBI:57856"/>
        <dbReference type="ChEBI" id="CHEBI:59789"/>
        <dbReference type="ChEBI" id="CHEBI:73542"/>
        <dbReference type="ChEBI" id="CHEBI:74269"/>
        <dbReference type="EC" id="2.1.1.228"/>
    </reaction>
</comment>
<comment type="subunit">
    <text evidence="1">Monomer.</text>
</comment>
<comment type="subcellular location">
    <subcellularLocation>
        <location evidence="1">Mitochondrion matrix</location>
    </subcellularLocation>
    <subcellularLocation>
        <location evidence="1">Nucleus</location>
    </subcellularLocation>
    <subcellularLocation>
        <location evidence="1">Cytoplasm</location>
    </subcellularLocation>
    <text evidence="1">Predominantly in the mitochondria and in the nucleus.</text>
</comment>
<comment type="similarity">
    <text evidence="2">Belongs to the class I-like SAM-binding methyltransferase superfamily. TRM5/TYW2 family.</text>
</comment>
<dbReference type="EC" id="2.1.1.228" evidence="1"/>
<dbReference type="EMBL" id="AE014296">
    <property type="protein sequence ID" value="AAN11538.2"/>
    <property type="molecule type" value="Genomic_DNA"/>
</dbReference>
<dbReference type="EMBL" id="BT082011">
    <property type="protein sequence ID" value="ACO57630.1"/>
    <property type="molecule type" value="mRNA"/>
</dbReference>
<dbReference type="RefSeq" id="NP_728821.2">
    <property type="nucleotide sequence ID" value="NM_167995.2"/>
</dbReference>
<dbReference type="SMR" id="Q8IRE4"/>
<dbReference type="FunCoup" id="Q8IRE4">
    <property type="interactions" value="1152"/>
</dbReference>
<dbReference type="IntAct" id="Q8IRE4">
    <property type="interactions" value="1"/>
</dbReference>
<dbReference type="STRING" id="7227.FBpp0072898"/>
<dbReference type="PaxDb" id="7227-FBpp0072898"/>
<dbReference type="DNASU" id="317953"/>
<dbReference type="EnsemblMetazoa" id="FBtr0073034">
    <property type="protein sequence ID" value="FBpp0072898"/>
    <property type="gene ID" value="FBgn0052281"/>
</dbReference>
<dbReference type="GeneID" id="317953"/>
<dbReference type="KEGG" id="dme:Dmel_CG32281"/>
<dbReference type="UCSC" id="CG32281-RA">
    <property type="organism name" value="d. melanogaster"/>
</dbReference>
<dbReference type="AGR" id="FB:FBgn0052281"/>
<dbReference type="FlyBase" id="FBgn0052281">
    <property type="gene designation" value="CG32281"/>
</dbReference>
<dbReference type="VEuPathDB" id="VectorBase:FBgn0052281"/>
<dbReference type="eggNOG" id="KOG2078">
    <property type="taxonomic scope" value="Eukaryota"/>
</dbReference>
<dbReference type="GeneTree" id="ENSGT00940000153304"/>
<dbReference type="HOGENOM" id="CLU_022610_2_3_1"/>
<dbReference type="InParanoid" id="Q8IRE4"/>
<dbReference type="OMA" id="VGSHSQF"/>
<dbReference type="OrthoDB" id="408788at2759"/>
<dbReference type="PhylomeDB" id="Q8IRE4"/>
<dbReference type="BioGRID-ORCS" id="317953">
    <property type="hits" value="0 hits in 1 CRISPR screen"/>
</dbReference>
<dbReference type="GenomeRNAi" id="317953"/>
<dbReference type="PRO" id="PR:Q8IRE4"/>
<dbReference type="Proteomes" id="UP000000803">
    <property type="component" value="Chromosome 3L"/>
</dbReference>
<dbReference type="Bgee" id="FBgn0052281">
    <property type="expression patterns" value="Expressed in eye disc (Drosophila) and 42 other cell types or tissues"/>
</dbReference>
<dbReference type="GO" id="GO:0005737">
    <property type="term" value="C:cytoplasm"/>
    <property type="evidence" value="ECO:0000318"/>
    <property type="project" value="GO_Central"/>
</dbReference>
<dbReference type="GO" id="GO:0005759">
    <property type="term" value="C:mitochondrial matrix"/>
    <property type="evidence" value="ECO:0000250"/>
    <property type="project" value="FlyBase"/>
</dbReference>
<dbReference type="GO" id="GO:0005634">
    <property type="term" value="C:nucleus"/>
    <property type="evidence" value="ECO:0007669"/>
    <property type="project" value="UniProtKB-SubCell"/>
</dbReference>
<dbReference type="GO" id="GO:0052906">
    <property type="term" value="F:tRNA (guanine(37)-N1)-methyltransferase activity"/>
    <property type="evidence" value="ECO:0007669"/>
    <property type="project" value="UniProtKB-UniRule"/>
</dbReference>
<dbReference type="GO" id="GO:0008175">
    <property type="term" value="F:tRNA methyltransferase activity"/>
    <property type="evidence" value="ECO:0000318"/>
    <property type="project" value="GO_Central"/>
</dbReference>
<dbReference type="GO" id="GO:0070901">
    <property type="term" value="P:mitochondrial tRNA methylation"/>
    <property type="evidence" value="ECO:0000250"/>
    <property type="project" value="FlyBase"/>
</dbReference>
<dbReference type="GO" id="GO:0002939">
    <property type="term" value="P:tRNA N1-guanine methylation"/>
    <property type="evidence" value="ECO:0000318"/>
    <property type="project" value="GO_Central"/>
</dbReference>
<dbReference type="FunFam" id="3.30.300.110:FF:000001">
    <property type="entry name" value="tRNA (guanine(37)-N1)-methyltransferase"/>
    <property type="match status" value="1"/>
</dbReference>
<dbReference type="FunFam" id="3.40.50.150:FF:000102">
    <property type="entry name" value="tRNA (guanine(37)-N1)-methyltransferase"/>
    <property type="match status" value="1"/>
</dbReference>
<dbReference type="Gene3D" id="3.30.300.110">
    <property type="entry name" value="Met-10+ protein-like domains"/>
    <property type="match status" value="1"/>
</dbReference>
<dbReference type="Gene3D" id="3.40.50.150">
    <property type="entry name" value="Vaccinia Virus protein VP39"/>
    <property type="match status" value="1"/>
</dbReference>
<dbReference type="HAMAP" id="MF_03152">
    <property type="entry name" value="TRM5"/>
    <property type="match status" value="1"/>
</dbReference>
<dbReference type="InterPro" id="IPR030382">
    <property type="entry name" value="MeTrfase_TRM5/TYW2"/>
</dbReference>
<dbReference type="InterPro" id="IPR029063">
    <property type="entry name" value="SAM-dependent_MTases_sf"/>
</dbReference>
<dbReference type="InterPro" id="IPR056743">
    <property type="entry name" value="TRM5-TYW2-like_MTfase"/>
</dbReference>
<dbReference type="InterPro" id="IPR056744">
    <property type="entry name" value="TRM5/TYW2-like_N"/>
</dbReference>
<dbReference type="InterPro" id="IPR025792">
    <property type="entry name" value="tRNA_Gua_MeTrfase_euk"/>
</dbReference>
<dbReference type="PANTHER" id="PTHR23245:SF36">
    <property type="entry name" value="TRNA (GUANINE(37)-N1)-METHYLTRANSFERASE"/>
    <property type="match status" value="1"/>
</dbReference>
<dbReference type="PANTHER" id="PTHR23245">
    <property type="entry name" value="TRNA METHYLTRANSFERASE"/>
    <property type="match status" value="1"/>
</dbReference>
<dbReference type="Pfam" id="PF02475">
    <property type="entry name" value="TRM5-TYW2_MTfase"/>
    <property type="match status" value="1"/>
</dbReference>
<dbReference type="Pfam" id="PF25133">
    <property type="entry name" value="TYW2_N_2"/>
    <property type="match status" value="1"/>
</dbReference>
<dbReference type="SUPFAM" id="SSF53335">
    <property type="entry name" value="S-adenosyl-L-methionine-dependent methyltransferases"/>
    <property type="match status" value="1"/>
</dbReference>
<dbReference type="PROSITE" id="PS51684">
    <property type="entry name" value="SAM_MT_TRM5_TYW2"/>
    <property type="match status" value="1"/>
</dbReference>
<keyword id="KW-0963">Cytoplasm</keyword>
<keyword id="KW-0489">Methyltransferase</keyword>
<keyword id="KW-0496">Mitochondrion</keyword>
<keyword id="KW-0539">Nucleus</keyword>
<keyword id="KW-1185">Reference proteome</keyword>
<keyword id="KW-0949">S-adenosyl-L-methionine</keyword>
<keyword id="KW-0808">Transferase</keyword>
<keyword id="KW-0819">tRNA processing</keyword>
<accession>Q8IRE4</accession>
<evidence type="ECO:0000255" key="1">
    <source>
        <dbReference type="HAMAP-Rule" id="MF_03152"/>
    </source>
</evidence>
<evidence type="ECO:0000305" key="2"/>
<proteinExistence type="evidence at transcript level"/>